<comment type="function">
    <text evidence="1 2 5 6 8">Involved in GABAergic but not glutamatergic transmission (PubMed:29395912). Binds and traps GABAA receptors in the endoplasmic reticulum (ER) (PubMed:29395912). Modulates postsynaptic GABAergic transmission, and therefore inhibitory neurotransmission, by reducing the plasma membrane expression of these receptors (PubMed:29395912). Altered GABAergic signaling is one among many causes of cleft palate (PubMed:29395912). Might function as a lipid scramblase, translocating lipids in membranes from one leaflet to the other one (By similarity). Required for efficient glycosylphosphatidylinositol (GPI) inositol deacylation in the ER, which is a crucial step to switch GPI-anchored proteins (GPI-APs) from protein folding to transport states (By similarity). May play a role in T-cell development (PubMed:9218588).</text>
</comment>
<comment type="subcellular location">
    <subcellularLocation>
        <location evidence="10">Membrane</location>
        <topology evidence="11">Multi-pass membrane protein</topology>
    </subcellularLocation>
</comment>
<comment type="tissue specificity">
    <text evidence="6 7">Widely expressed (PubMed:9218588, PubMed:9828125). Expressed by subcapsular and outer cortical thymic cells (PubMed:9218588).</text>
</comment>
<comment type="developmental stage">
    <text evidence="7">Ubiquitously expressed in mouse embryo.</text>
</comment>
<comment type="miscellaneous">
    <text>Mice overexpressing Clptm1 exhibit an aberrant development of thymocytes.</text>
</comment>
<comment type="similarity">
    <text evidence="10">Belongs to the CLPTM1 family.</text>
</comment>
<comment type="sequence caution" evidence="10">
    <conflict type="frameshift">
        <sequence resource="EMBL-CDS" id="BAA19836"/>
    </conflict>
</comment>
<proteinExistence type="evidence at protein level"/>
<feature type="initiator methionine" description="Removed" evidence="1">
    <location>
        <position position="1"/>
    </location>
</feature>
<feature type="chain" id="PRO_0000245097" description="Putative lipid scramblase CLPTM1">
    <location>
        <begin position="2"/>
        <end position="664"/>
    </location>
</feature>
<feature type="topological domain" description="Extracellular" evidence="3">
    <location>
        <begin position="2"/>
        <end position="354"/>
    </location>
</feature>
<feature type="transmembrane region" description="Helical" evidence="3">
    <location>
        <begin position="355"/>
        <end position="375"/>
    </location>
</feature>
<feature type="topological domain" description="Cytoplasmic" evidence="3">
    <location>
        <begin position="376"/>
        <end position="390"/>
    </location>
</feature>
<feature type="transmembrane region" description="Helical" evidence="3">
    <location>
        <begin position="391"/>
        <end position="411"/>
    </location>
</feature>
<feature type="topological domain" description="Extracellular" evidence="3">
    <location>
        <begin position="412"/>
        <end position="416"/>
    </location>
</feature>
<feature type="transmembrane region" description="Helical" evidence="3">
    <location>
        <begin position="417"/>
        <end position="437"/>
    </location>
</feature>
<feature type="topological domain" description="Cytoplasmic" evidence="3">
    <location>
        <begin position="438"/>
        <end position="477"/>
    </location>
</feature>
<feature type="transmembrane region" description="Helical" evidence="3">
    <location>
        <begin position="478"/>
        <end position="498"/>
    </location>
</feature>
<feature type="topological domain" description="Extracellular" evidence="3">
    <location>
        <begin position="499"/>
        <end position="502"/>
    </location>
</feature>
<feature type="transmembrane region" description="Helical" evidence="3">
    <location>
        <begin position="503"/>
        <end position="523"/>
    </location>
</feature>
<feature type="topological domain" description="Cytoplasmic" evidence="3">
    <location>
        <begin position="524"/>
        <end position="664"/>
    </location>
</feature>
<feature type="region of interest" description="Disordered" evidence="4">
    <location>
        <begin position="1"/>
        <end position="51"/>
    </location>
</feature>
<feature type="region of interest" description="Disordered" evidence="4">
    <location>
        <begin position="618"/>
        <end position="664"/>
    </location>
</feature>
<feature type="compositionally biased region" description="Low complexity" evidence="4">
    <location>
        <begin position="1"/>
        <end position="16"/>
    </location>
</feature>
<feature type="compositionally biased region" description="Low complexity" evidence="4">
    <location>
        <begin position="618"/>
        <end position="628"/>
    </location>
</feature>
<feature type="modified residue" description="N-acetylalanine" evidence="1">
    <location>
        <position position="2"/>
    </location>
</feature>
<feature type="modified residue" description="Phosphoserine" evidence="1">
    <location>
        <position position="601"/>
    </location>
</feature>
<feature type="glycosylation site" description="N-linked (GlcNAc...) asparagine" evidence="3">
    <location>
        <position position="28"/>
    </location>
</feature>
<feature type="glycosylation site" description="N-linked (GlcNAc...) asparagine" evidence="3">
    <location>
        <position position="119"/>
    </location>
</feature>
<feature type="glycosylation site" description="N-linked (GlcNAc...) asparagine" evidence="3">
    <location>
        <position position="161"/>
    </location>
</feature>
<feature type="glycosylation site" description="N-linked (GlcNAc...) asparagine" evidence="3">
    <location>
        <position position="241"/>
    </location>
</feature>
<feature type="glycosylation site" description="N-linked (GlcNAc...) asparagine" evidence="3">
    <location>
        <position position="295"/>
    </location>
</feature>
<feature type="glycosylation site" description="N-linked (GlcNAc...) asparagine" evidence="3">
    <location>
        <position position="413"/>
    </location>
</feature>
<feature type="sequence conflict" description="In Ref. 2; BAE28332." evidence="10" ref="2">
    <original>N</original>
    <variation>Y</variation>
    <location>
        <position position="161"/>
    </location>
</feature>
<feature type="sequence conflict" description="In Ref. 2; BAE31514." evidence="10" ref="2">
    <original>V</original>
    <variation>A</variation>
    <location>
        <position position="470"/>
    </location>
</feature>
<accession>Q8VBZ3</accession>
<accession>O08708</accession>
<accession>Q3U758</accession>
<accession>Q3U823</accession>
<accession>Q3UG77</accession>
<accession>Q8VEJ6</accession>
<evidence type="ECO:0000250" key="1">
    <source>
        <dbReference type="UniProtKB" id="O96005"/>
    </source>
</evidence>
<evidence type="ECO:0000250" key="2">
    <source>
        <dbReference type="UniProtKB" id="Q96KA5"/>
    </source>
</evidence>
<evidence type="ECO:0000255" key="3"/>
<evidence type="ECO:0000256" key="4">
    <source>
        <dbReference type="SAM" id="MobiDB-lite"/>
    </source>
</evidence>
<evidence type="ECO:0000269" key="5">
    <source>
    </source>
</evidence>
<evidence type="ECO:0000269" key="6">
    <source>
    </source>
</evidence>
<evidence type="ECO:0000269" key="7">
    <source>
    </source>
</evidence>
<evidence type="ECO:0000303" key="8">
    <source>
    </source>
</evidence>
<evidence type="ECO:0000303" key="9">
    <source>
    </source>
</evidence>
<evidence type="ECO:0000305" key="10"/>
<evidence type="ECO:0000305" key="11">
    <source>
    </source>
</evidence>
<organism>
    <name type="scientific">Mus musculus</name>
    <name type="common">Mouse</name>
    <dbReference type="NCBI Taxonomy" id="10090"/>
    <lineage>
        <taxon>Eukaryota</taxon>
        <taxon>Metazoa</taxon>
        <taxon>Chordata</taxon>
        <taxon>Craniata</taxon>
        <taxon>Vertebrata</taxon>
        <taxon>Euteleostomi</taxon>
        <taxon>Mammalia</taxon>
        <taxon>Eutheria</taxon>
        <taxon>Euarchontoglires</taxon>
        <taxon>Glires</taxon>
        <taxon>Rodentia</taxon>
        <taxon>Myomorpha</taxon>
        <taxon>Muroidea</taxon>
        <taxon>Muridae</taxon>
        <taxon>Murinae</taxon>
        <taxon>Mus</taxon>
        <taxon>Mus</taxon>
    </lineage>
</organism>
<protein>
    <recommendedName>
        <fullName evidence="1">Putative lipid scramblase CLPTM1</fullName>
    </recommendedName>
    <alternativeName>
        <fullName>Cleft lip and palate transmembrane protein 1 homolog</fullName>
    </alternativeName>
    <alternativeName>
        <fullName evidence="9">Thymic epithelial cell surface antigen</fullName>
    </alternativeName>
</protein>
<gene>
    <name type="primary">Clptm1</name>
    <name type="synonym">N14</name>
</gene>
<reference key="1">
    <citation type="journal article" date="1997" name="J. Immunol.">
        <title>Transgenic expression of a novel thymic epithelial cell antigen stimulates aberrant development of thymocytes.</title>
        <authorList>
            <person name="Takeuchi T."/>
            <person name="Kuro-o M."/>
            <person name="Miyazawa H."/>
            <person name="Ohtsuki Y."/>
            <person name="Yamamoto H."/>
        </authorList>
    </citation>
    <scope>NUCLEOTIDE SEQUENCE [MRNA]</scope>
    <scope>FUNCTION</scope>
    <scope>TISSUE SPECIFICITY</scope>
    <source>
        <strain>BALB/cJ</strain>
        <tissue>Thymus</tissue>
    </source>
</reference>
<reference key="2">
    <citation type="journal article" date="2005" name="Science">
        <title>The transcriptional landscape of the mammalian genome.</title>
        <authorList>
            <person name="Carninci P."/>
            <person name="Kasukawa T."/>
            <person name="Katayama S."/>
            <person name="Gough J."/>
            <person name="Frith M.C."/>
            <person name="Maeda N."/>
            <person name="Oyama R."/>
            <person name="Ravasi T."/>
            <person name="Lenhard B."/>
            <person name="Wells C."/>
            <person name="Kodzius R."/>
            <person name="Shimokawa K."/>
            <person name="Bajic V.B."/>
            <person name="Brenner S.E."/>
            <person name="Batalov S."/>
            <person name="Forrest A.R."/>
            <person name="Zavolan M."/>
            <person name="Davis M.J."/>
            <person name="Wilming L.G."/>
            <person name="Aidinis V."/>
            <person name="Allen J.E."/>
            <person name="Ambesi-Impiombato A."/>
            <person name="Apweiler R."/>
            <person name="Aturaliya R.N."/>
            <person name="Bailey T.L."/>
            <person name="Bansal M."/>
            <person name="Baxter L."/>
            <person name="Beisel K.W."/>
            <person name="Bersano T."/>
            <person name="Bono H."/>
            <person name="Chalk A.M."/>
            <person name="Chiu K.P."/>
            <person name="Choudhary V."/>
            <person name="Christoffels A."/>
            <person name="Clutterbuck D.R."/>
            <person name="Crowe M.L."/>
            <person name="Dalla E."/>
            <person name="Dalrymple B.P."/>
            <person name="de Bono B."/>
            <person name="Della Gatta G."/>
            <person name="di Bernardo D."/>
            <person name="Down T."/>
            <person name="Engstrom P."/>
            <person name="Fagiolini M."/>
            <person name="Faulkner G."/>
            <person name="Fletcher C.F."/>
            <person name="Fukushima T."/>
            <person name="Furuno M."/>
            <person name="Futaki S."/>
            <person name="Gariboldi M."/>
            <person name="Georgii-Hemming P."/>
            <person name="Gingeras T.R."/>
            <person name="Gojobori T."/>
            <person name="Green R.E."/>
            <person name="Gustincich S."/>
            <person name="Harbers M."/>
            <person name="Hayashi Y."/>
            <person name="Hensch T.K."/>
            <person name="Hirokawa N."/>
            <person name="Hill D."/>
            <person name="Huminiecki L."/>
            <person name="Iacono M."/>
            <person name="Ikeo K."/>
            <person name="Iwama A."/>
            <person name="Ishikawa T."/>
            <person name="Jakt M."/>
            <person name="Kanapin A."/>
            <person name="Katoh M."/>
            <person name="Kawasawa Y."/>
            <person name="Kelso J."/>
            <person name="Kitamura H."/>
            <person name="Kitano H."/>
            <person name="Kollias G."/>
            <person name="Krishnan S.P."/>
            <person name="Kruger A."/>
            <person name="Kummerfeld S.K."/>
            <person name="Kurochkin I.V."/>
            <person name="Lareau L.F."/>
            <person name="Lazarevic D."/>
            <person name="Lipovich L."/>
            <person name="Liu J."/>
            <person name="Liuni S."/>
            <person name="McWilliam S."/>
            <person name="Madan Babu M."/>
            <person name="Madera M."/>
            <person name="Marchionni L."/>
            <person name="Matsuda H."/>
            <person name="Matsuzawa S."/>
            <person name="Miki H."/>
            <person name="Mignone F."/>
            <person name="Miyake S."/>
            <person name="Morris K."/>
            <person name="Mottagui-Tabar S."/>
            <person name="Mulder N."/>
            <person name="Nakano N."/>
            <person name="Nakauchi H."/>
            <person name="Ng P."/>
            <person name="Nilsson R."/>
            <person name="Nishiguchi S."/>
            <person name="Nishikawa S."/>
            <person name="Nori F."/>
            <person name="Ohara O."/>
            <person name="Okazaki Y."/>
            <person name="Orlando V."/>
            <person name="Pang K.C."/>
            <person name="Pavan W.J."/>
            <person name="Pavesi G."/>
            <person name="Pesole G."/>
            <person name="Petrovsky N."/>
            <person name="Piazza S."/>
            <person name="Reed J."/>
            <person name="Reid J.F."/>
            <person name="Ring B.Z."/>
            <person name="Ringwald M."/>
            <person name="Rost B."/>
            <person name="Ruan Y."/>
            <person name="Salzberg S.L."/>
            <person name="Sandelin A."/>
            <person name="Schneider C."/>
            <person name="Schoenbach C."/>
            <person name="Sekiguchi K."/>
            <person name="Semple C.A."/>
            <person name="Seno S."/>
            <person name="Sessa L."/>
            <person name="Sheng Y."/>
            <person name="Shibata Y."/>
            <person name="Shimada H."/>
            <person name="Shimada K."/>
            <person name="Silva D."/>
            <person name="Sinclair B."/>
            <person name="Sperling S."/>
            <person name="Stupka E."/>
            <person name="Sugiura K."/>
            <person name="Sultana R."/>
            <person name="Takenaka Y."/>
            <person name="Taki K."/>
            <person name="Tammoja K."/>
            <person name="Tan S.L."/>
            <person name="Tang S."/>
            <person name="Taylor M.S."/>
            <person name="Tegner J."/>
            <person name="Teichmann S.A."/>
            <person name="Ueda H.R."/>
            <person name="van Nimwegen E."/>
            <person name="Verardo R."/>
            <person name="Wei C.L."/>
            <person name="Yagi K."/>
            <person name="Yamanishi H."/>
            <person name="Zabarovsky E."/>
            <person name="Zhu S."/>
            <person name="Zimmer A."/>
            <person name="Hide W."/>
            <person name="Bult C."/>
            <person name="Grimmond S.M."/>
            <person name="Teasdale R.D."/>
            <person name="Liu E.T."/>
            <person name="Brusic V."/>
            <person name="Quackenbush J."/>
            <person name="Wahlestedt C."/>
            <person name="Mattick J.S."/>
            <person name="Hume D.A."/>
            <person name="Kai C."/>
            <person name="Sasaki D."/>
            <person name="Tomaru Y."/>
            <person name="Fukuda S."/>
            <person name="Kanamori-Katayama M."/>
            <person name="Suzuki M."/>
            <person name="Aoki J."/>
            <person name="Arakawa T."/>
            <person name="Iida J."/>
            <person name="Imamura K."/>
            <person name="Itoh M."/>
            <person name="Kato T."/>
            <person name="Kawaji H."/>
            <person name="Kawagashira N."/>
            <person name="Kawashima T."/>
            <person name="Kojima M."/>
            <person name="Kondo S."/>
            <person name="Konno H."/>
            <person name="Nakano K."/>
            <person name="Ninomiya N."/>
            <person name="Nishio T."/>
            <person name="Okada M."/>
            <person name="Plessy C."/>
            <person name="Shibata K."/>
            <person name="Shiraki T."/>
            <person name="Suzuki S."/>
            <person name="Tagami M."/>
            <person name="Waki K."/>
            <person name="Watahiki A."/>
            <person name="Okamura-Oho Y."/>
            <person name="Suzuki H."/>
            <person name="Kawai J."/>
            <person name="Hayashizaki Y."/>
        </authorList>
    </citation>
    <scope>NUCLEOTIDE SEQUENCE [LARGE SCALE MRNA]</scope>
    <source>
        <strain>C57BL/6J</strain>
        <tissue>Bone marrow</tissue>
    </source>
</reference>
<reference key="3">
    <citation type="journal article" date="2004" name="Genome Res.">
        <title>The status, quality, and expansion of the NIH full-length cDNA project: the Mammalian Gene Collection (MGC).</title>
        <authorList>
            <consortium name="The MGC Project Team"/>
        </authorList>
    </citation>
    <scope>NUCLEOTIDE SEQUENCE [LARGE SCALE MRNA]</scope>
    <source>
        <strain>FVB/N</strain>
        <tissue>Mammary tumor</tissue>
        <tissue>Salivary gland</tissue>
    </source>
</reference>
<reference key="4">
    <citation type="journal article" date="1998" name="Genomics">
        <title>Characterization of a novel gene disrupted by a balanced chromosomal translocation t(2;19)(q11.2;q13.3) in a family with cleft lip and palate.</title>
        <authorList>
            <person name="Yoshiura K."/>
            <person name="Machida J."/>
            <person name="Daack-Hirsch S."/>
            <person name="Patil S.R."/>
            <person name="Ashworth L.K."/>
            <person name="Hecht J.T."/>
            <person name="Murray J.C."/>
        </authorList>
    </citation>
    <scope>DEVELOPMENTAL STAGE</scope>
    <scope>SUBCELLULAR LOCATION</scope>
</reference>
<reference key="5">
    <citation type="journal article" date="2010" name="Cell">
        <title>A tissue-specific atlas of mouse protein phosphorylation and expression.</title>
        <authorList>
            <person name="Huttlin E.L."/>
            <person name="Jedrychowski M.P."/>
            <person name="Elias J.E."/>
            <person name="Goswami T."/>
            <person name="Rad R."/>
            <person name="Beausoleil S.A."/>
            <person name="Villen J."/>
            <person name="Haas W."/>
            <person name="Sowa M.E."/>
            <person name="Gygi S.P."/>
        </authorList>
    </citation>
    <scope>IDENTIFICATION BY MASS SPECTROMETRY [LARGE SCALE ANALYSIS]</scope>
    <source>
        <tissue>Brain</tissue>
        <tissue>Brown adipose tissue</tissue>
        <tissue>Heart</tissue>
        <tissue>Kidney</tissue>
        <tissue>Liver</tissue>
        <tissue>Lung</tissue>
        <tissue>Pancreas</tissue>
        <tissue>Spleen</tissue>
        <tissue>Testis</tissue>
    </source>
</reference>
<reference key="6">
    <citation type="journal article" date="2018" name="Neuron">
        <title>Clptm1 Limits Forward Trafficking of GABAA Receptors to Scale Inhibitory Synaptic Strength.</title>
        <authorList>
            <person name="Ge Y."/>
            <person name="Kang Y."/>
            <person name="Cassidy R.M."/>
            <person name="Moon K.M."/>
            <person name="Lewis R."/>
            <person name="Wong R.O.L."/>
            <person name="Foster L.J."/>
            <person name="Craig A.M."/>
        </authorList>
    </citation>
    <scope>FUNCTION</scope>
</reference>
<name>CLPT1_MOUSE</name>
<dbReference type="EMBL" id="D67067">
    <property type="protein sequence ID" value="BAA19836.1"/>
    <property type="status" value="ALT_FRAME"/>
    <property type="molecule type" value="mRNA"/>
</dbReference>
<dbReference type="EMBL" id="AK148080">
    <property type="protein sequence ID" value="BAE28332.1"/>
    <property type="molecule type" value="mRNA"/>
</dbReference>
<dbReference type="EMBL" id="AK152410">
    <property type="protein sequence ID" value="BAE31196.1"/>
    <property type="molecule type" value="mRNA"/>
</dbReference>
<dbReference type="EMBL" id="AK152809">
    <property type="protein sequence ID" value="BAE31514.1"/>
    <property type="molecule type" value="mRNA"/>
</dbReference>
<dbReference type="EMBL" id="BC018389">
    <property type="protein sequence ID" value="AAH18389.1"/>
    <property type="molecule type" value="mRNA"/>
</dbReference>
<dbReference type="EMBL" id="BC022172">
    <property type="protein sequence ID" value="AAH22172.1"/>
    <property type="molecule type" value="mRNA"/>
</dbReference>
<dbReference type="CCDS" id="CCDS39800.1"/>
<dbReference type="RefSeq" id="NP_062623.2">
    <property type="nucleotide sequence ID" value="NM_019649.2"/>
</dbReference>
<dbReference type="BioGRID" id="207996">
    <property type="interactions" value="5"/>
</dbReference>
<dbReference type="FunCoup" id="Q8VBZ3">
    <property type="interactions" value="2215"/>
</dbReference>
<dbReference type="STRING" id="10090.ENSMUSP00000051293"/>
<dbReference type="GlyConnect" id="2218">
    <property type="glycosylation" value="7 N-Linked glycans (2 sites)"/>
</dbReference>
<dbReference type="GlyCosmos" id="Q8VBZ3">
    <property type="glycosylation" value="6 sites, 7 glycans"/>
</dbReference>
<dbReference type="GlyGen" id="Q8VBZ3">
    <property type="glycosylation" value="6 sites, 9 N-linked glycans (3 sites)"/>
</dbReference>
<dbReference type="iPTMnet" id="Q8VBZ3"/>
<dbReference type="PhosphoSitePlus" id="Q8VBZ3"/>
<dbReference type="SwissPalm" id="Q8VBZ3"/>
<dbReference type="jPOST" id="Q8VBZ3"/>
<dbReference type="PaxDb" id="10090-ENSMUSP00000051293"/>
<dbReference type="PeptideAtlas" id="Q8VBZ3"/>
<dbReference type="ProteomicsDB" id="285493"/>
<dbReference type="Pumba" id="Q8VBZ3"/>
<dbReference type="Antibodypedia" id="31237">
    <property type="antibodies" value="171 antibodies from 29 providers"/>
</dbReference>
<dbReference type="DNASU" id="56457"/>
<dbReference type="Ensembl" id="ENSMUST00000055242.11">
    <property type="protein sequence ID" value="ENSMUSP00000051293.10"/>
    <property type="gene ID" value="ENSMUSG00000002981.11"/>
</dbReference>
<dbReference type="GeneID" id="56457"/>
<dbReference type="KEGG" id="mmu:56457"/>
<dbReference type="UCSC" id="uc009fmq.1">
    <property type="organism name" value="mouse"/>
</dbReference>
<dbReference type="AGR" id="MGI:1927155"/>
<dbReference type="CTD" id="1209"/>
<dbReference type="MGI" id="MGI:1927155">
    <property type="gene designation" value="Clptm1"/>
</dbReference>
<dbReference type="VEuPathDB" id="HostDB:ENSMUSG00000002981"/>
<dbReference type="eggNOG" id="KOG2489">
    <property type="taxonomic scope" value="Eukaryota"/>
</dbReference>
<dbReference type="GeneTree" id="ENSGT00530000063461"/>
<dbReference type="HOGENOM" id="CLU_019907_3_1_1"/>
<dbReference type="InParanoid" id="Q8VBZ3"/>
<dbReference type="OMA" id="TLWAHFY"/>
<dbReference type="OrthoDB" id="378564at2759"/>
<dbReference type="PhylomeDB" id="Q8VBZ3"/>
<dbReference type="TreeFam" id="TF318501"/>
<dbReference type="BioGRID-ORCS" id="56457">
    <property type="hits" value="13 hits in 79 CRISPR screens"/>
</dbReference>
<dbReference type="ChiTaRS" id="Clptm1">
    <property type="organism name" value="mouse"/>
</dbReference>
<dbReference type="PRO" id="PR:Q8VBZ3"/>
<dbReference type="Proteomes" id="UP000000589">
    <property type="component" value="Chromosome 7"/>
</dbReference>
<dbReference type="RNAct" id="Q8VBZ3">
    <property type="molecule type" value="protein"/>
</dbReference>
<dbReference type="Bgee" id="ENSMUSG00000002981">
    <property type="expression patterns" value="Expressed in embryonic brain and 261 other cell types or tissues"/>
</dbReference>
<dbReference type="GO" id="GO:0009897">
    <property type="term" value="C:external side of plasma membrane"/>
    <property type="evidence" value="ECO:0000314"/>
    <property type="project" value="BHF-UCL"/>
</dbReference>
<dbReference type="GO" id="GO:0050811">
    <property type="term" value="F:GABA receptor binding"/>
    <property type="evidence" value="ECO:0000314"/>
    <property type="project" value="UniProtKB"/>
</dbReference>
<dbReference type="GO" id="GO:0030154">
    <property type="term" value="P:cell differentiation"/>
    <property type="evidence" value="ECO:0007669"/>
    <property type="project" value="UniProtKB-KW"/>
</dbReference>
<dbReference type="GO" id="GO:0033081">
    <property type="term" value="P:regulation of T cell differentiation in thymus"/>
    <property type="evidence" value="ECO:0000315"/>
    <property type="project" value="BHF-UCL"/>
</dbReference>
<dbReference type="InterPro" id="IPR008429">
    <property type="entry name" value="CLPTM1"/>
</dbReference>
<dbReference type="PANTHER" id="PTHR21347">
    <property type="entry name" value="CLEFT LIP AND PALATE ASSOCIATED TRANSMEMBRANE PROTEIN-RELATED"/>
    <property type="match status" value="1"/>
</dbReference>
<dbReference type="PANTHER" id="PTHR21347:SF14">
    <property type="entry name" value="LIPID SCRAMBLASE CLPTM1-RELATED"/>
    <property type="match status" value="1"/>
</dbReference>
<dbReference type="Pfam" id="PF05602">
    <property type="entry name" value="CLPTM1"/>
    <property type="match status" value="1"/>
</dbReference>
<sequence length="664" mass="75291">MAAAQEADGAGSAVVAAGGGSSGQVTSNGSIGRDTPAETQPQNPPPQPAPNAWQVIKGVLFRIFIIWAISSWFRRGPSPQDQSGPGGAPRVASRNLFPKDTLMNLHVYISEHEHFTDFNATSALFWEQHDLVYGDWTSGENSDGCYEHFAELDIPQSVQQNGSIYIHVYFTKSGFHPDPRQKALYRRLATVHMSRMINKYKRRRFQKTKNLLTGETEADPEMIKRAEDYGPVEVISHWHPNITINIVDDHTPWVKGSVPPPLDQYVKFDAVSGDYYPIIYFNDYWNLQKDYYPINESLASLPLRVSFCPLSLWRWQLYAAQSTKSPWNFLGDELYEQSDEEQDSVKVALLETSPYLLALTIIVSIVHSVFEFLAFKNDIQFWNSRQSLEGLSVRSVFFGVFQSFVVLLYILDNETNFVVQVSVFIGVLIDLWKITKVMDVRLDREHRVAGIFPCPTFKDKSTYIESSTKVYDDMAFRYLSWILFPLLGCYAVYSLLYLEHKGWYSWVLSMLYGFLLTFGFITMTPQLFINYKLKSVAHLPWRMLTYKALNTFIDDLFAFVIKMPVMYRIGCLRDDVVFFIYLYQRWIYRVDPTRVNEFGMSGEDVSAAASRAQASTAAGALTPAPSTAVSGEDASTVPKATSGACTASQPQEAPPKPAEDKKKD</sequence>
<keyword id="KW-0007">Acetylation</keyword>
<keyword id="KW-0217">Developmental protein</keyword>
<keyword id="KW-0221">Differentiation</keyword>
<keyword id="KW-0325">Glycoprotein</keyword>
<keyword id="KW-0472">Membrane</keyword>
<keyword id="KW-0597">Phosphoprotein</keyword>
<keyword id="KW-1185">Reference proteome</keyword>
<keyword id="KW-0812">Transmembrane</keyword>
<keyword id="KW-1133">Transmembrane helix</keyword>